<sequence>MTITPQNLIALLPLLIVGLTVVVVMLSIAWRRNHFLNATLSVIGLNAALVSLWFVGQVGAMDVTPLMRVDGFAMLYTGLVLLASLATCTFAYPWLEGYNDNKDEFYLLVLIAALGGILLANANHLASLFLGIELISLPLFGLVGYAFRQKRSLEASIKYTILSAAASSFLLFGMALVYAQSGDLSFVALGKNLGDGMLNEPLLLAGFGLMIVGLGFKLSLVPFHLWTPDVYQGAPAPVSTFLATASKIVIFGVVMRLFLYAPVGDSEAIRVVLAIIAFASIIFGNLMALSQTNIKRLLGYSSISHLGYLLVALIALQTGEMSMEAVGVYLAGYLFSSLGAFGVVSLMSSPYRGPDADSLFSYRGLFWHRPILAAVMTVMMLSLAGIPMTLGFIGKFYVLAVGVQAHLWWLVGAVVVGSAIGLYYYLRVAVSLYLHAPEQPGRDAPSNWQYSAGGIVVLISALLVLVLGVWPQPLISIVRLAMPLM</sequence>
<comment type="function">
    <text evidence="1">NDH-1 shuttles electrons from NADH, via FMN and iron-sulfur (Fe-S) centers, to quinones in the respiratory chain. The immediate electron acceptor for the enzyme in this species is believed to be ubiquinone. Couples the redox reaction to proton translocation (for every two electrons transferred, four hydrogen ions are translocated across the cytoplasmic membrane), and thus conserves the redox energy in a proton gradient.</text>
</comment>
<comment type="catalytic activity">
    <reaction evidence="1">
        <text>a quinone + NADH + 5 H(+)(in) = a quinol + NAD(+) + 4 H(+)(out)</text>
        <dbReference type="Rhea" id="RHEA:57888"/>
        <dbReference type="ChEBI" id="CHEBI:15378"/>
        <dbReference type="ChEBI" id="CHEBI:24646"/>
        <dbReference type="ChEBI" id="CHEBI:57540"/>
        <dbReference type="ChEBI" id="CHEBI:57945"/>
        <dbReference type="ChEBI" id="CHEBI:132124"/>
    </reaction>
</comment>
<comment type="subunit">
    <text evidence="1">NDH-1 is composed of 13 different subunits. Subunits NuoA, H, J, K, L, M, N constitute the membrane sector of the complex.</text>
</comment>
<comment type="subcellular location">
    <subcellularLocation>
        <location evidence="1">Cell inner membrane</location>
        <topology evidence="1">Multi-pass membrane protein</topology>
    </subcellularLocation>
</comment>
<comment type="similarity">
    <text evidence="1">Belongs to the complex I subunit 2 family.</text>
</comment>
<comment type="sequence caution" evidence="2">
    <conflict type="erroneous initiation">
        <sequence resource="EMBL-CDS" id="ABB62542"/>
    </conflict>
</comment>
<gene>
    <name evidence="1" type="primary">nuoN</name>
    <name type="ordered locus">SDY_2472</name>
</gene>
<protein>
    <recommendedName>
        <fullName evidence="1">NADH-quinone oxidoreductase subunit N</fullName>
        <ecNumber evidence="1">7.1.1.-</ecNumber>
    </recommendedName>
    <alternativeName>
        <fullName evidence="1">NADH dehydrogenase I subunit N</fullName>
    </alternativeName>
    <alternativeName>
        <fullName evidence="1">NDH-1 subunit N</fullName>
    </alternativeName>
</protein>
<keyword id="KW-0997">Cell inner membrane</keyword>
<keyword id="KW-1003">Cell membrane</keyword>
<keyword id="KW-0472">Membrane</keyword>
<keyword id="KW-0520">NAD</keyword>
<keyword id="KW-0874">Quinone</keyword>
<keyword id="KW-1185">Reference proteome</keyword>
<keyword id="KW-1278">Translocase</keyword>
<keyword id="KW-0812">Transmembrane</keyword>
<keyword id="KW-1133">Transmembrane helix</keyword>
<keyword id="KW-0813">Transport</keyword>
<keyword id="KW-0830">Ubiquinone</keyword>
<dbReference type="EC" id="7.1.1.-" evidence="1"/>
<dbReference type="EMBL" id="CP000034">
    <property type="protein sequence ID" value="ABB62542.1"/>
    <property type="status" value="ALT_INIT"/>
    <property type="molecule type" value="Genomic_DNA"/>
</dbReference>
<dbReference type="RefSeq" id="WP_000156727.1">
    <property type="nucleotide sequence ID" value="NC_007606.1"/>
</dbReference>
<dbReference type="RefSeq" id="YP_404033.2">
    <property type="nucleotide sequence ID" value="NC_007606.1"/>
</dbReference>
<dbReference type="SMR" id="Q32DR3"/>
<dbReference type="STRING" id="300267.SDY_2472"/>
<dbReference type="EnsemblBacteria" id="ABB62542">
    <property type="protein sequence ID" value="ABB62542"/>
    <property type="gene ID" value="SDY_2472"/>
</dbReference>
<dbReference type="KEGG" id="sdy:SDY_2472"/>
<dbReference type="PATRIC" id="fig|300267.13.peg.2983"/>
<dbReference type="HOGENOM" id="CLU_007100_1_5_6"/>
<dbReference type="Proteomes" id="UP000002716">
    <property type="component" value="Chromosome"/>
</dbReference>
<dbReference type="GO" id="GO:0005886">
    <property type="term" value="C:plasma membrane"/>
    <property type="evidence" value="ECO:0007669"/>
    <property type="project" value="UniProtKB-SubCell"/>
</dbReference>
<dbReference type="GO" id="GO:0008137">
    <property type="term" value="F:NADH dehydrogenase (ubiquinone) activity"/>
    <property type="evidence" value="ECO:0007669"/>
    <property type="project" value="InterPro"/>
</dbReference>
<dbReference type="GO" id="GO:0050136">
    <property type="term" value="F:NADH:ubiquinone reductase (non-electrogenic) activity"/>
    <property type="evidence" value="ECO:0007669"/>
    <property type="project" value="UniProtKB-UniRule"/>
</dbReference>
<dbReference type="GO" id="GO:0048038">
    <property type="term" value="F:quinone binding"/>
    <property type="evidence" value="ECO:0007669"/>
    <property type="project" value="UniProtKB-KW"/>
</dbReference>
<dbReference type="GO" id="GO:0042773">
    <property type="term" value="P:ATP synthesis coupled electron transport"/>
    <property type="evidence" value="ECO:0007669"/>
    <property type="project" value="InterPro"/>
</dbReference>
<dbReference type="HAMAP" id="MF_00445">
    <property type="entry name" value="NDH1_NuoN_1"/>
    <property type="match status" value="1"/>
</dbReference>
<dbReference type="InterPro" id="IPR010096">
    <property type="entry name" value="NADH-Q_OxRdtase_suN/2"/>
</dbReference>
<dbReference type="InterPro" id="IPR001750">
    <property type="entry name" value="ND/Mrp_TM"/>
</dbReference>
<dbReference type="NCBIfam" id="TIGR01770">
    <property type="entry name" value="NDH_I_N"/>
    <property type="match status" value="1"/>
</dbReference>
<dbReference type="NCBIfam" id="NF004439">
    <property type="entry name" value="PRK05777.1-1"/>
    <property type="match status" value="1"/>
</dbReference>
<dbReference type="PANTHER" id="PTHR22773">
    <property type="entry name" value="NADH DEHYDROGENASE"/>
    <property type="match status" value="1"/>
</dbReference>
<dbReference type="Pfam" id="PF00361">
    <property type="entry name" value="Proton_antipo_M"/>
    <property type="match status" value="1"/>
</dbReference>
<feature type="chain" id="PRO_0000249450" description="NADH-quinone oxidoreductase subunit N">
    <location>
        <begin position="1"/>
        <end position="485"/>
    </location>
</feature>
<feature type="transmembrane region" description="Helical" evidence="1">
    <location>
        <begin position="8"/>
        <end position="28"/>
    </location>
</feature>
<feature type="transmembrane region" description="Helical" evidence="1">
    <location>
        <begin position="35"/>
        <end position="55"/>
    </location>
</feature>
<feature type="transmembrane region" description="Helical" evidence="1">
    <location>
        <begin position="71"/>
        <end position="91"/>
    </location>
</feature>
<feature type="transmembrane region" description="Helical" evidence="1">
    <location>
        <begin position="105"/>
        <end position="125"/>
    </location>
</feature>
<feature type="transmembrane region" description="Helical" evidence="1">
    <location>
        <begin position="127"/>
        <end position="147"/>
    </location>
</feature>
<feature type="transmembrane region" description="Helical" evidence="1">
    <location>
        <begin position="159"/>
        <end position="179"/>
    </location>
</feature>
<feature type="transmembrane region" description="Helical" evidence="1">
    <location>
        <begin position="203"/>
        <end position="223"/>
    </location>
</feature>
<feature type="transmembrane region" description="Helical" evidence="1">
    <location>
        <begin position="235"/>
        <end position="255"/>
    </location>
</feature>
<feature type="transmembrane region" description="Helical" evidence="1">
    <location>
        <begin position="271"/>
        <end position="291"/>
    </location>
</feature>
<feature type="transmembrane region" description="Helical" evidence="1">
    <location>
        <begin position="297"/>
        <end position="317"/>
    </location>
</feature>
<feature type="transmembrane region" description="Helical" evidence="1">
    <location>
        <begin position="326"/>
        <end position="346"/>
    </location>
</feature>
<feature type="transmembrane region" description="Helical" evidence="1">
    <location>
        <begin position="373"/>
        <end position="393"/>
    </location>
</feature>
<feature type="transmembrane region" description="Helical" evidence="1">
    <location>
        <begin position="408"/>
        <end position="430"/>
    </location>
</feature>
<feature type="transmembrane region" description="Helical" evidence="1">
    <location>
        <begin position="455"/>
        <end position="475"/>
    </location>
</feature>
<organism>
    <name type="scientific">Shigella dysenteriae serotype 1 (strain Sd197)</name>
    <dbReference type="NCBI Taxonomy" id="300267"/>
    <lineage>
        <taxon>Bacteria</taxon>
        <taxon>Pseudomonadati</taxon>
        <taxon>Pseudomonadota</taxon>
        <taxon>Gammaproteobacteria</taxon>
        <taxon>Enterobacterales</taxon>
        <taxon>Enterobacteriaceae</taxon>
        <taxon>Shigella</taxon>
    </lineage>
</organism>
<evidence type="ECO:0000255" key="1">
    <source>
        <dbReference type="HAMAP-Rule" id="MF_00445"/>
    </source>
</evidence>
<evidence type="ECO:0000305" key="2"/>
<name>NUON_SHIDS</name>
<proteinExistence type="inferred from homology"/>
<reference key="1">
    <citation type="journal article" date="2005" name="Nucleic Acids Res.">
        <title>Genome dynamics and diversity of Shigella species, the etiologic agents of bacillary dysentery.</title>
        <authorList>
            <person name="Yang F."/>
            <person name="Yang J."/>
            <person name="Zhang X."/>
            <person name="Chen L."/>
            <person name="Jiang Y."/>
            <person name="Yan Y."/>
            <person name="Tang X."/>
            <person name="Wang J."/>
            <person name="Xiong Z."/>
            <person name="Dong J."/>
            <person name="Xue Y."/>
            <person name="Zhu Y."/>
            <person name="Xu X."/>
            <person name="Sun L."/>
            <person name="Chen S."/>
            <person name="Nie H."/>
            <person name="Peng J."/>
            <person name="Xu J."/>
            <person name="Wang Y."/>
            <person name="Yuan Z."/>
            <person name="Wen Y."/>
            <person name="Yao Z."/>
            <person name="Shen Y."/>
            <person name="Qiang B."/>
            <person name="Hou Y."/>
            <person name="Yu J."/>
            <person name="Jin Q."/>
        </authorList>
    </citation>
    <scope>NUCLEOTIDE SEQUENCE [LARGE SCALE GENOMIC DNA]</scope>
    <source>
        <strain>Sd197</strain>
    </source>
</reference>
<accession>Q32DR3</accession>